<accession>Q8FTE3</accession>
<evidence type="ECO:0000255" key="1">
    <source>
        <dbReference type="HAMAP-Rule" id="MF_02112"/>
    </source>
</evidence>
<evidence type="ECO:0000256" key="2">
    <source>
        <dbReference type="SAM" id="MobiDB-lite"/>
    </source>
</evidence>
<feature type="chain" id="PRO_0000396976" description="AAA ATPase forming ring-shaped complexes">
    <location>
        <begin position="1"/>
        <end position="526"/>
    </location>
</feature>
<feature type="region of interest" description="Disordered" evidence="2">
    <location>
        <begin position="1"/>
        <end position="20"/>
    </location>
</feature>
<feature type="coiled-coil region" evidence="1">
    <location>
        <begin position="20"/>
        <end position="59"/>
    </location>
</feature>
<feature type="compositionally biased region" description="Polar residues" evidence="2">
    <location>
        <begin position="1"/>
        <end position="18"/>
    </location>
</feature>
<feature type="binding site" evidence="1">
    <location>
        <begin position="257"/>
        <end position="262"/>
    </location>
    <ligand>
        <name>ATP</name>
        <dbReference type="ChEBI" id="CHEBI:30616"/>
    </ligand>
</feature>
<comment type="subunit">
    <text evidence="1">Homohexamer. Assembles into a hexameric ring structure.</text>
</comment>
<comment type="similarity">
    <text evidence="1">Belongs to the AAA ATPase family.</text>
</comment>
<organism>
    <name type="scientific">Corynebacterium efficiens (strain DSM 44549 / YS-314 / AJ 12310 / JCM 11189 / NBRC 100395)</name>
    <dbReference type="NCBI Taxonomy" id="196164"/>
    <lineage>
        <taxon>Bacteria</taxon>
        <taxon>Bacillati</taxon>
        <taxon>Actinomycetota</taxon>
        <taxon>Actinomycetes</taxon>
        <taxon>Mycobacteriales</taxon>
        <taxon>Corynebacteriaceae</taxon>
        <taxon>Corynebacterium</taxon>
    </lineage>
</organism>
<gene>
    <name evidence="1" type="primary">arc</name>
    <name type="ordered locus">CE1626</name>
</gene>
<keyword id="KW-0067">ATP-binding</keyword>
<keyword id="KW-0175">Coiled coil</keyword>
<keyword id="KW-0547">Nucleotide-binding</keyword>
<keyword id="KW-1185">Reference proteome</keyword>
<proteinExistence type="inferred from homology"/>
<name>ARC_COREF</name>
<dbReference type="EMBL" id="BA000035">
    <property type="protein sequence ID" value="BAC18436.1"/>
    <property type="molecule type" value="Genomic_DNA"/>
</dbReference>
<dbReference type="SMR" id="Q8FTE3"/>
<dbReference type="STRING" id="196164.gene:10742045"/>
<dbReference type="KEGG" id="cef:CE1626"/>
<dbReference type="eggNOG" id="COG1222">
    <property type="taxonomic scope" value="Bacteria"/>
</dbReference>
<dbReference type="HOGENOM" id="CLU_036054_0_0_11"/>
<dbReference type="Proteomes" id="UP000001409">
    <property type="component" value="Chromosome"/>
</dbReference>
<dbReference type="GO" id="GO:0000502">
    <property type="term" value="C:proteasome complex"/>
    <property type="evidence" value="ECO:0007669"/>
    <property type="project" value="InterPro"/>
</dbReference>
<dbReference type="GO" id="GO:0005524">
    <property type="term" value="F:ATP binding"/>
    <property type="evidence" value="ECO:0007669"/>
    <property type="project" value="UniProtKB-UniRule"/>
</dbReference>
<dbReference type="GO" id="GO:0016887">
    <property type="term" value="F:ATP hydrolysis activity"/>
    <property type="evidence" value="ECO:0007669"/>
    <property type="project" value="UniProtKB-UniRule"/>
</dbReference>
<dbReference type="GO" id="GO:0019941">
    <property type="term" value="P:modification-dependent protein catabolic process"/>
    <property type="evidence" value="ECO:0007669"/>
    <property type="project" value="InterPro"/>
</dbReference>
<dbReference type="GO" id="GO:0010498">
    <property type="term" value="P:proteasomal protein catabolic process"/>
    <property type="evidence" value="ECO:0007669"/>
    <property type="project" value="InterPro"/>
</dbReference>
<dbReference type="FunFam" id="3.40.50.300:FF:001025">
    <property type="entry name" value="ATPase family, AAA domain-containing 2B"/>
    <property type="match status" value="1"/>
</dbReference>
<dbReference type="Gene3D" id="1.10.8.60">
    <property type="match status" value="1"/>
</dbReference>
<dbReference type="Gene3D" id="1.20.5.170">
    <property type="match status" value="1"/>
</dbReference>
<dbReference type="Gene3D" id="2.40.50.140">
    <property type="entry name" value="Nucleic acid-binding proteins"/>
    <property type="match status" value="2"/>
</dbReference>
<dbReference type="Gene3D" id="3.40.50.300">
    <property type="entry name" value="P-loop containing nucleotide triphosphate hydrolases"/>
    <property type="match status" value="1"/>
</dbReference>
<dbReference type="HAMAP" id="MF_02112">
    <property type="entry name" value="ARC_ATPase"/>
    <property type="match status" value="1"/>
</dbReference>
<dbReference type="InterPro" id="IPR003593">
    <property type="entry name" value="AAA+_ATPase"/>
</dbReference>
<dbReference type="InterPro" id="IPR050168">
    <property type="entry name" value="AAA_ATPase_domain"/>
</dbReference>
<dbReference type="InterPro" id="IPR003959">
    <property type="entry name" value="ATPase_AAA_core"/>
</dbReference>
<dbReference type="InterPro" id="IPR003960">
    <property type="entry name" value="ATPase_AAA_CS"/>
</dbReference>
<dbReference type="InterPro" id="IPR012340">
    <property type="entry name" value="NA-bd_OB-fold"/>
</dbReference>
<dbReference type="InterPro" id="IPR027417">
    <property type="entry name" value="P-loop_NTPase"/>
</dbReference>
<dbReference type="InterPro" id="IPR032501">
    <property type="entry name" value="Prot_ATP_ID_OB_2nd"/>
</dbReference>
<dbReference type="InterPro" id="IPR041626">
    <property type="entry name" value="Prot_ATP_ID_OB_N"/>
</dbReference>
<dbReference type="InterPro" id="IPR022482">
    <property type="entry name" value="Proteasome_ATPase"/>
</dbReference>
<dbReference type="NCBIfam" id="TIGR03689">
    <property type="entry name" value="pup_AAA"/>
    <property type="match status" value="1"/>
</dbReference>
<dbReference type="PANTHER" id="PTHR23077">
    <property type="entry name" value="AAA-FAMILY ATPASE"/>
    <property type="match status" value="1"/>
</dbReference>
<dbReference type="PANTHER" id="PTHR23077:SF144">
    <property type="entry name" value="PROTEASOME-ASSOCIATED ATPASE"/>
    <property type="match status" value="1"/>
</dbReference>
<dbReference type="Pfam" id="PF00004">
    <property type="entry name" value="AAA"/>
    <property type="match status" value="1"/>
</dbReference>
<dbReference type="Pfam" id="PF16450">
    <property type="entry name" value="Prot_ATP_ID_OB_C"/>
    <property type="match status" value="1"/>
</dbReference>
<dbReference type="Pfam" id="PF17758">
    <property type="entry name" value="Prot_ATP_ID_OB_N"/>
    <property type="match status" value="1"/>
</dbReference>
<dbReference type="SMART" id="SM00382">
    <property type="entry name" value="AAA"/>
    <property type="match status" value="1"/>
</dbReference>
<dbReference type="SUPFAM" id="SSF52540">
    <property type="entry name" value="P-loop containing nucleoside triphosphate hydrolases"/>
    <property type="match status" value="1"/>
</dbReference>
<dbReference type="PROSITE" id="PS00674">
    <property type="entry name" value="AAA"/>
    <property type="match status" value="1"/>
</dbReference>
<sequence>MGDMASSTDPAAHNSFSDFNREEMTRLADNVRSLQRTNQDLSARNTKLAEMLKSSRDKLSMMYQQLEDMAQPPSLYGTFLEMSKDGTNAEIFAGGRRMRVAMSPMLCAGDLMPGVQVRLGEGNQILEACDFEQTGDLATLMEMIGRDRALISDRSGEERVVKLAGPLMDRTRKLPRPGDTLLVDRRAGYAFENIPKTEISKLALEEAPDVSYVDIGGLDDQIELIQDAVELPFLHPEMYRSYKLHPPKGVLLYGPPGCGKTLIAKAVANSLSQRIGDAGTSYFINVKGPELLNKYVGETERQIRVIFERARELAGDGRPVIIFFDEMESIFRTRGSGISSDMETTVVPQLLAELDGVEDLSNVIVIGATNREELIDPAILRPGRLDIKIRVQRPNRSGARDIFARYITDAIPLAAPVDELIDTAVDHLFTPRPYVRLTLIDGTVETLNYHDFVSGAMIANIVDRAKKSAIKDHIDGRTTGLSAEHLIHAIDQENQQSEDLPNTSNPDEWTRIIGRQGKRVAEVEVV</sequence>
<protein>
    <recommendedName>
        <fullName evidence="1">AAA ATPase forming ring-shaped complexes</fullName>
        <shortName evidence="1">ARC</shortName>
    </recommendedName>
</protein>
<reference key="1">
    <citation type="journal article" date="2003" name="Genome Res.">
        <title>Comparative complete genome sequence analysis of the amino acid replacements responsible for the thermostability of Corynebacterium efficiens.</title>
        <authorList>
            <person name="Nishio Y."/>
            <person name="Nakamura Y."/>
            <person name="Kawarabayasi Y."/>
            <person name="Usuda Y."/>
            <person name="Kimura E."/>
            <person name="Sugimoto S."/>
            <person name="Matsui K."/>
            <person name="Yamagishi A."/>
            <person name="Kikuchi H."/>
            <person name="Ikeo K."/>
            <person name="Gojobori T."/>
        </authorList>
    </citation>
    <scope>NUCLEOTIDE SEQUENCE [LARGE SCALE GENOMIC DNA]</scope>
    <source>
        <strain>DSM 44549 / YS-314 / AJ 12310 / JCM 11189 / NBRC 100395</strain>
    </source>
</reference>